<feature type="chain" id="PRO_0000069050" description="Muscarinic acetylcholine receptor gar-3">
    <location>
        <begin position="1"/>
        <end position="611"/>
    </location>
</feature>
<feature type="topological domain" description="Extracellular" evidence="1">
    <location>
        <begin position="1"/>
        <end position="67"/>
    </location>
</feature>
<feature type="transmembrane region" description="Helical; Name=1" evidence="1">
    <location>
        <begin position="68"/>
        <end position="88"/>
    </location>
</feature>
<feature type="topological domain" description="Cytoplasmic" evidence="1">
    <location>
        <begin position="89"/>
        <end position="101"/>
    </location>
</feature>
<feature type="transmembrane region" description="Helical; Name=2" evidence="1">
    <location>
        <begin position="102"/>
        <end position="122"/>
    </location>
</feature>
<feature type="topological domain" description="Extracellular" evidence="1">
    <location>
        <begin position="123"/>
        <end position="140"/>
    </location>
</feature>
<feature type="transmembrane region" description="Helical; Name=3" evidence="1">
    <location>
        <begin position="141"/>
        <end position="161"/>
    </location>
</feature>
<feature type="topological domain" description="Cytoplasmic" evidence="1">
    <location>
        <begin position="162"/>
        <end position="181"/>
    </location>
</feature>
<feature type="transmembrane region" description="Helical; Name=4" evidence="1">
    <location>
        <begin position="182"/>
        <end position="202"/>
    </location>
</feature>
<feature type="topological domain" description="Extracellular" evidence="1">
    <location>
        <begin position="203"/>
        <end position="227"/>
    </location>
</feature>
<feature type="transmembrane region" description="Helical; Name=5" evidence="1">
    <location>
        <begin position="228"/>
        <end position="248"/>
    </location>
</feature>
<feature type="topological domain" description="Cytoplasmic" evidence="1">
    <location>
        <begin position="249"/>
        <end position="525"/>
    </location>
</feature>
<feature type="transmembrane region" description="Helical; Name=6" evidence="1">
    <location>
        <begin position="526"/>
        <end position="546"/>
    </location>
</feature>
<feature type="topological domain" description="Extracellular" evidence="1">
    <location>
        <begin position="547"/>
        <end position="557"/>
    </location>
</feature>
<feature type="transmembrane region" description="Helical; Name=7" evidence="1">
    <location>
        <begin position="558"/>
        <end position="578"/>
    </location>
</feature>
<feature type="topological domain" description="Cytoplasmic" evidence="1">
    <location>
        <begin position="579"/>
        <end position="611"/>
    </location>
</feature>
<feature type="region of interest" description="Disordered" evidence="4">
    <location>
        <begin position="299"/>
        <end position="364"/>
    </location>
</feature>
<feature type="region of interest" description="Disordered" evidence="4">
    <location>
        <begin position="377"/>
        <end position="432"/>
    </location>
</feature>
<feature type="region of interest" description="Disordered" evidence="4">
    <location>
        <begin position="446"/>
        <end position="477"/>
    </location>
</feature>
<feature type="region of interest" description="Disordered" evidence="4">
    <location>
        <begin position="500"/>
        <end position="519"/>
    </location>
</feature>
<feature type="compositionally biased region" description="Low complexity" evidence="4">
    <location>
        <begin position="307"/>
        <end position="317"/>
    </location>
</feature>
<feature type="compositionally biased region" description="Basic and acidic residues" evidence="4">
    <location>
        <begin position="503"/>
        <end position="519"/>
    </location>
</feature>
<feature type="glycosylation site" description="N-linked (GlcNAc...) asparagine" evidence="7">
    <location>
        <position position="28"/>
    </location>
</feature>
<feature type="glycosylation site" description="N-linked (GlcNAc...) asparagine" evidence="7">
    <location>
        <position position="33"/>
    </location>
</feature>
<feature type="disulfide bond" evidence="3">
    <location>
        <begin position="138"/>
        <end position="218"/>
    </location>
</feature>
<feature type="splice variant" id="VSP_012003" description="In isoform a." evidence="9 10">
    <location>
        <begin position="271"/>
        <end position="296"/>
    </location>
</feature>
<dbReference type="EMBL" id="AF139093">
    <property type="protein sequence ID" value="AAD48771.1"/>
    <property type="molecule type" value="mRNA"/>
</dbReference>
<dbReference type="EMBL" id="AY221631">
    <property type="protein sequence ID" value="AAP97492.1"/>
    <property type="molecule type" value="mRNA"/>
</dbReference>
<dbReference type="EMBL" id="AL034391">
    <property type="protein sequence ID" value="CAA22301.2"/>
    <property type="molecule type" value="Genomic_DNA"/>
</dbReference>
<dbReference type="EMBL" id="Z81486">
    <property type="protein sequence ID" value="CAA22301.2"/>
    <property type="status" value="JOINED"/>
    <property type="molecule type" value="Genomic_DNA"/>
</dbReference>
<dbReference type="EMBL" id="AL034391">
    <property type="protein sequence ID" value="CAE47471.1"/>
    <property type="molecule type" value="Genomic_DNA"/>
</dbReference>
<dbReference type="EMBL" id="Z81486">
    <property type="protein sequence ID" value="CAE47471.1"/>
    <property type="status" value="JOINED"/>
    <property type="molecule type" value="Genomic_DNA"/>
</dbReference>
<dbReference type="PIR" id="T20171">
    <property type="entry name" value="T20171"/>
</dbReference>
<dbReference type="PIR" id="T26789">
    <property type="entry name" value="T26789"/>
</dbReference>
<dbReference type="RefSeq" id="NP_001024235.1">
    <molecule id="Q9U7D5-2"/>
    <property type="nucleotide sequence ID" value="NM_001029064.4"/>
</dbReference>
<dbReference type="RefSeq" id="NP_001024236.1">
    <molecule id="Q9U7D5-1"/>
    <property type="nucleotide sequence ID" value="NM_001029065.5"/>
</dbReference>
<dbReference type="SMR" id="Q9U7D5"/>
<dbReference type="BioGRID" id="44964">
    <property type="interactions" value="2"/>
</dbReference>
<dbReference type="FunCoup" id="Q9U7D5">
    <property type="interactions" value="274"/>
</dbReference>
<dbReference type="STRING" id="6239.Y40H4A.1b.1"/>
<dbReference type="GlyCosmos" id="Q9U7D5">
    <property type="glycosylation" value="2 sites, No reported glycans"/>
</dbReference>
<dbReference type="iPTMnet" id="Q9U7D5"/>
<dbReference type="PaxDb" id="6239-Y40H4A.1b"/>
<dbReference type="EnsemblMetazoa" id="Y40H4A.1a.1">
    <molecule id="Q9U7D5-2"/>
    <property type="protein sequence ID" value="Y40H4A.1a.1"/>
    <property type="gene ID" value="WBGene00001519"/>
</dbReference>
<dbReference type="EnsemblMetazoa" id="Y40H4A.1a.2">
    <molecule id="Q9U7D5-2"/>
    <property type="protein sequence ID" value="Y40H4A.1a.2"/>
    <property type="gene ID" value="WBGene00001519"/>
</dbReference>
<dbReference type="EnsemblMetazoa" id="Y40H4A.1a.3">
    <molecule id="Q9U7D5-2"/>
    <property type="protein sequence ID" value="Y40H4A.1a.3"/>
    <property type="gene ID" value="WBGene00001519"/>
</dbReference>
<dbReference type="EnsemblMetazoa" id="Y40H4A.1b.1">
    <molecule id="Q9U7D5-1"/>
    <property type="protein sequence ID" value="Y40H4A.1b.1"/>
    <property type="gene ID" value="WBGene00001519"/>
</dbReference>
<dbReference type="GeneID" id="179962"/>
<dbReference type="KEGG" id="cel:CELE_Y40H4A.1"/>
<dbReference type="UCSC" id="Y40H4A.1b.1">
    <molecule id="Q9U7D5-1"/>
    <property type="organism name" value="c. elegans"/>
</dbReference>
<dbReference type="AGR" id="WB:WBGene00001519"/>
<dbReference type="CTD" id="179962"/>
<dbReference type="WormBase" id="Y40H4A.1a">
    <molecule id="Q9U7D5-2"/>
    <property type="protein sequence ID" value="CE27783"/>
    <property type="gene ID" value="WBGene00001519"/>
    <property type="gene designation" value="gar-3"/>
</dbReference>
<dbReference type="WormBase" id="Y40H4A.1b">
    <molecule id="Q9U7D5-1"/>
    <property type="protein sequence ID" value="CE35800"/>
    <property type="gene ID" value="WBGene00001519"/>
    <property type="gene designation" value="gar-3"/>
</dbReference>
<dbReference type="eggNOG" id="KOG4220">
    <property type="taxonomic scope" value="Eukaryota"/>
</dbReference>
<dbReference type="GeneTree" id="ENSGT00940000166540"/>
<dbReference type="InParanoid" id="Q9U7D5"/>
<dbReference type="OMA" id="IPVTLWH"/>
<dbReference type="OrthoDB" id="10071887at2759"/>
<dbReference type="PhylomeDB" id="Q9U7D5"/>
<dbReference type="Reactome" id="R-CEL-390648">
    <property type="pathway name" value="Muscarinic acetylcholine receptors"/>
</dbReference>
<dbReference type="Reactome" id="R-CEL-390650">
    <property type="pathway name" value="Histamine receptors"/>
</dbReference>
<dbReference type="Reactome" id="R-CEL-416476">
    <property type="pathway name" value="G alpha (q) signalling events"/>
</dbReference>
<dbReference type="Reactome" id="R-CEL-418594">
    <property type="pathway name" value="G alpha (i) signalling events"/>
</dbReference>
<dbReference type="Reactome" id="R-CEL-8856825">
    <property type="pathway name" value="Cargo recognition for clathrin-mediated endocytosis"/>
</dbReference>
<dbReference type="Reactome" id="R-CEL-8856828">
    <property type="pathway name" value="Clathrin-mediated endocytosis"/>
</dbReference>
<dbReference type="PRO" id="PR:Q9U7D5"/>
<dbReference type="Proteomes" id="UP000001940">
    <property type="component" value="Chromosome V"/>
</dbReference>
<dbReference type="Bgee" id="WBGene00001519">
    <property type="expression patterns" value="Expressed in pharyngeal muscle cell (C elegans) and 3 other cell types or tissues"/>
</dbReference>
<dbReference type="GO" id="GO:0030425">
    <property type="term" value="C:dendrite"/>
    <property type="evidence" value="ECO:0000318"/>
    <property type="project" value="GO_Central"/>
</dbReference>
<dbReference type="GO" id="GO:0005886">
    <property type="term" value="C:plasma membrane"/>
    <property type="evidence" value="ECO:0000314"/>
    <property type="project" value="WormBase"/>
</dbReference>
<dbReference type="GO" id="GO:0045202">
    <property type="term" value="C:synapse"/>
    <property type="evidence" value="ECO:0000318"/>
    <property type="project" value="GO_Central"/>
</dbReference>
<dbReference type="GO" id="GO:0016907">
    <property type="term" value="F:G protein-coupled acetylcholine receptor activity"/>
    <property type="evidence" value="ECO:0000315"/>
    <property type="project" value="UniProtKB"/>
</dbReference>
<dbReference type="GO" id="GO:0001508">
    <property type="term" value="P:action potential"/>
    <property type="evidence" value="ECO:0000315"/>
    <property type="project" value="WormBase"/>
</dbReference>
<dbReference type="GO" id="GO:0007197">
    <property type="term" value="P:adenylate cyclase-inhibiting G protein-coupled acetylcholine receptor signaling pathway"/>
    <property type="evidence" value="ECO:0000318"/>
    <property type="project" value="GO_Central"/>
</dbReference>
<dbReference type="GO" id="GO:0007268">
    <property type="term" value="P:chemical synaptic transmission"/>
    <property type="evidence" value="ECO:0000318"/>
    <property type="project" value="GO_Central"/>
</dbReference>
<dbReference type="GO" id="GO:0007213">
    <property type="term" value="P:G protein-coupled acetylcholine receptor signaling pathway"/>
    <property type="evidence" value="ECO:0000315"/>
    <property type="project" value="WormBase"/>
</dbReference>
<dbReference type="GO" id="GO:0007186">
    <property type="term" value="P:G protein-coupled receptor signaling pathway"/>
    <property type="evidence" value="ECO:0000315"/>
    <property type="project" value="UniProtKB"/>
</dbReference>
<dbReference type="GO" id="GO:0007187">
    <property type="term" value="P:G protein-coupled receptor signaling pathway, coupled to cyclic nucleotide second messenger"/>
    <property type="evidence" value="ECO:0000318"/>
    <property type="project" value="GO_Central"/>
</dbReference>
<dbReference type="GO" id="GO:0014057">
    <property type="term" value="P:positive regulation of acetylcholine secretion, neurotransmission"/>
    <property type="evidence" value="ECO:0000315"/>
    <property type="project" value="UniProtKB"/>
</dbReference>
<dbReference type="GO" id="GO:1902474">
    <property type="term" value="P:positive regulation of protein localization to synapse"/>
    <property type="evidence" value="ECO:0000315"/>
    <property type="project" value="WormBase"/>
</dbReference>
<dbReference type="GO" id="GO:0043051">
    <property type="term" value="P:regulation of nematode pharyngeal pumping"/>
    <property type="evidence" value="ECO:0000315"/>
    <property type="project" value="WormBase"/>
</dbReference>
<dbReference type="GO" id="GO:0009410">
    <property type="term" value="P:response to xenobiotic stimulus"/>
    <property type="evidence" value="ECO:0000315"/>
    <property type="project" value="UniProtKB"/>
</dbReference>
<dbReference type="CDD" id="cd15301">
    <property type="entry name" value="7tmA_mAChR_DM1-like"/>
    <property type="match status" value="1"/>
</dbReference>
<dbReference type="FunFam" id="1.20.1070.10:FF:000288">
    <property type="entry name" value="Muscarinic acetylcholine receptor"/>
    <property type="match status" value="1"/>
</dbReference>
<dbReference type="FunFam" id="1.20.1070.10:FF:000582">
    <property type="entry name" value="Muscarinic acetylcholine receptor gar-3"/>
    <property type="match status" value="1"/>
</dbReference>
<dbReference type="Gene3D" id="1.20.1070.10">
    <property type="entry name" value="Rhodopsin 7-helix transmembrane proteins"/>
    <property type="match status" value="2"/>
</dbReference>
<dbReference type="InterPro" id="IPR000276">
    <property type="entry name" value="GPCR_Rhodpsn"/>
</dbReference>
<dbReference type="InterPro" id="IPR017452">
    <property type="entry name" value="GPCR_Rhodpsn_7TM"/>
</dbReference>
<dbReference type="InterPro" id="IPR000995">
    <property type="entry name" value="Musac_Ach_rcpt"/>
</dbReference>
<dbReference type="PANTHER" id="PTHR24247">
    <property type="entry name" value="5-HYDROXYTRYPTAMINE RECEPTOR"/>
    <property type="match status" value="1"/>
</dbReference>
<dbReference type="PANTHER" id="PTHR24247:SF265">
    <property type="entry name" value="MUSCARINIC ACETYLCHOLINE RECEPTOR DM1"/>
    <property type="match status" value="1"/>
</dbReference>
<dbReference type="Pfam" id="PF00001">
    <property type="entry name" value="7tm_1"/>
    <property type="match status" value="2"/>
</dbReference>
<dbReference type="PRINTS" id="PR00237">
    <property type="entry name" value="GPCRRHODOPSN"/>
</dbReference>
<dbReference type="PRINTS" id="PR00243">
    <property type="entry name" value="MUSCARINICR"/>
</dbReference>
<dbReference type="SUPFAM" id="SSF81321">
    <property type="entry name" value="Family A G protein-coupled receptor-like"/>
    <property type="match status" value="1"/>
</dbReference>
<dbReference type="PROSITE" id="PS00237">
    <property type="entry name" value="G_PROTEIN_RECEP_F1_1"/>
    <property type="match status" value="1"/>
</dbReference>
<dbReference type="PROSITE" id="PS50262">
    <property type="entry name" value="G_PROTEIN_RECEP_F1_2"/>
    <property type="match status" value="1"/>
</dbReference>
<sequence length="611" mass="69563">MQSSSLGNADDPRFRQTHLFQMLVKVINTSAENATKTAIATSSTSTPSFVDTYSTSSLLGEEGRMVMIVVIGAMFALVTSLGNLMVMVSFKIDKQLQTISNYFLFSLAVADIAIGVISIPMFTYYTAIQKWDLGYTMCQFWLCIDYLMSNASVLNLLLISFDRYFSVTRPLSYRPRRTTKKALTMIACTYIISLILWPPWIISWPYIEGKFTAEPGTCVVQFLQTNPYVTVGTAVAAFYLPVTIMCILYTRVYWETQKRQKEFGKLQATQTWASDVVDRPSTQSFRNSKMWKKVKKFSRRSMKRDVSSTSIIKSSGSMRKKNNQDGYVEDSVTPCTSSRNSKRKSWLRNCTGKSNSSSEDSSEAVAMNLDDTSLSSSHFALSGSRRRNISPPCTPMPTNFEDEEQTDAGASMRNGSARFRSRPSDTGKNNNSDTYTVLIELNDEGSRPSVRLSSCEPYLDEPISTRNRSKSDCNSEIDERRHSLLNKQSPFKNGRILKNFSSQERKSEKEQRKNERKQESKAAKTLSAILCAFIATWTPYNLIVCWEAFFPNTVPNVLWTFSYFLCYINSTINPLCYALCNARFRHTYMRILRCKFKAERPTMNQGYVRRN</sequence>
<name>ACM3_CAEEL</name>
<organism evidence="11">
    <name type="scientific">Caenorhabditis elegans</name>
    <dbReference type="NCBI Taxonomy" id="6239"/>
    <lineage>
        <taxon>Eukaryota</taxon>
        <taxon>Metazoa</taxon>
        <taxon>Ecdysozoa</taxon>
        <taxon>Nematoda</taxon>
        <taxon>Chromadorea</taxon>
        <taxon>Rhabditida</taxon>
        <taxon>Rhabditina</taxon>
        <taxon>Rhabditomorpha</taxon>
        <taxon>Rhabditoidea</taxon>
        <taxon>Rhabditidae</taxon>
        <taxon>Peloderinae</taxon>
        <taxon>Caenorhabditis</taxon>
    </lineage>
</organism>
<reference evidence="11" key="1">
    <citation type="journal article" date="1999" name="Recept. Channels">
        <title>Cloning and functional characterization of a Caenorhabditis elegans muscarinic acetylcholine receptor.</title>
        <authorList>
            <person name="Hwang J.M."/>
            <person name="Chang D.-J."/>
            <person name="Kim U.S."/>
            <person name="Lee Y.-S."/>
            <person name="Park Y.-S."/>
            <person name="Kaang B.-K."/>
            <person name="Cho N.J."/>
        </authorList>
    </citation>
    <scope>NUCLEOTIDE SEQUENCE [MRNA] (ISOFORM A)</scope>
    <scope>FUNCTION</scope>
    <source>
        <strain evidence="11">Bristol N2</strain>
    </source>
</reference>
<reference key="2">
    <citation type="journal article" date="2003" name="Biochem. Biophys. Res. Commun.">
        <title>Alternative splicing of the muscarinic acetylcholine receptor GAR-3 in Caenorhabditis elegans.</title>
        <authorList>
            <person name="Park Y.-S."/>
            <person name="Kim S."/>
            <person name="Shin Y."/>
            <person name="Choi B."/>
            <person name="Cho N.J."/>
        </authorList>
    </citation>
    <scope>NUCLEOTIDE SEQUENCE [MRNA] (ISOFORMS A AND B)</scope>
    <scope>FUNCTION</scope>
    <scope>DEVELOPMENTAL STAGE</scope>
</reference>
<reference key="3">
    <citation type="journal article" date="1998" name="Science">
        <title>Genome sequence of the nematode C. elegans: a platform for investigating biology.</title>
        <authorList>
            <consortium name="The C. elegans sequencing consortium"/>
        </authorList>
    </citation>
    <scope>NUCLEOTIDE SEQUENCE [LARGE SCALE GENOMIC DNA]</scope>
    <source>
        <strain>Bristol N2</strain>
    </source>
</reference>
<reference key="4">
    <citation type="journal article" date="2007" name="Mol. Cell. Proteomics">
        <title>Proteomics reveals N-linked glycoprotein diversity in Caenorhabditis elegans and suggests an atypical translocation mechanism for integral membrane proteins.</title>
        <authorList>
            <person name="Kaji H."/>
            <person name="Kamiie J."/>
            <person name="Kawakami H."/>
            <person name="Kido K."/>
            <person name="Yamauchi Y."/>
            <person name="Shinkawa T."/>
            <person name="Taoka M."/>
            <person name="Takahashi N."/>
            <person name="Isobe T."/>
        </authorList>
    </citation>
    <scope>GLYCOSYLATION [LARGE SCALE ANALYSIS] AT ASN-28 AND ASN-33</scope>
    <scope>IDENTIFICATION BY MASS SPECTROMETRY</scope>
    <source>
        <strain>Bristol N2</strain>
    </source>
</reference>
<reference key="5">
    <citation type="journal article" date="2008" name="J. Neurosci.">
        <title>Behavioral impact of neurotransmitter-activated G-protein-coupled receptors: muscarinic and GABAB receptors regulate Caenorhabditis elegans locomotion.</title>
        <authorList>
            <person name="Dittman J.S."/>
            <person name="Kaplan J.M."/>
        </authorList>
    </citation>
    <scope>FUNCTION</scope>
</reference>
<gene>
    <name type="primary">gar-3</name>
    <name type="ORF">Y40H4A.1</name>
</gene>
<comment type="function">
    <text evidence="2 5 6 8">The muscarinic acetylcholine receptor mediates various cellular responses, including inhibition of adenylate cyclase, breakdown of phosphoinositides and modulation of potassium channels through the action of G proteins (PubMed:10635059, PubMed:12927813). Primary transducing effect is Pi turnover (By similarity). Enhances the release of the neurotransmitter acetlycholine in cholinergic motor neurons, which in turn positively feeds back to depolarize body wall muscles and allows for the maintenance of normal body posture and locomotion (PubMed:18614679).</text>
</comment>
<comment type="subcellular location">
    <subcellularLocation>
        <location>Cell membrane</location>
        <topology>Multi-pass membrane protein</topology>
    </subcellularLocation>
</comment>
<comment type="alternative products">
    <event type="alternative splicing"/>
    <isoform>
        <id>Q9U7D5-1</id>
        <name>b</name>
        <name>GAR-3a</name>
        <sequence type="displayed"/>
    </isoform>
    <isoform>
        <id>Q9U7D5-2</id>
        <name>a</name>
        <name>GAR-3b</name>
        <sequence type="described" ref="VSP_012003"/>
    </isoform>
</comment>
<comment type="developmental stage">
    <text evidence="6">Isoform a and isoform b are expressed at all developmental stages examined, isoform a is more abundant at embryonic and early larval stages and isoform b at first larval instar.</text>
</comment>
<comment type="similarity">
    <text evidence="3">Belongs to the G-protein coupled receptor 1 family. Muscarinic acetylcholine receptor subfamily.</text>
</comment>
<keyword id="KW-0025">Alternative splicing</keyword>
<keyword id="KW-1003">Cell membrane</keyword>
<keyword id="KW-1015">Disulfide bond</keyword>
<keyword id="KW-0297">G-protein coupled receptor</keyword>
<keyword id="KW-0325">Glycoprotein</keyword>
<keyword id="KW-0472">Membrane</keyword>
<keyword id="KW-0675">Receptor</keyword>
<keyword id="KW-1185">Reference proteome</keyword>
<keyword id="KW-0807">Transducer</keyword>
<keyword id="KW-0812">Transmembrane</keyword>
<keyword id="KW-1133">Transmembrane helix</keyword>
<proteinExistence type="evidence at protein level"/>
<accession>Q9U7D5</accession>
<accession>Q7JKV1</accession>
<accession>Q9XW31</accession>
<protein>
    <recommendedName>
        <fullName>Muscarinic acetylcholine receptor gar-3</fullName>
    </recommendedName>
    <alternativeName>
        <fullName>G-protein-linked acetylcholine receptor 3</fullName>
    </alternativeName>
</protein>
<evidence type="ECO:0000250" key="1"/>
<evidence type="ECO:0000250" key="2">
    <source>
        <dbReference type="UniProtKB" id="P20309"/>
    </source>
</evidence>
<evidence type="ECO:0000255" key="3">
    <source>
        <dbReference type="PROSITE-ProRule" id="PRU00521"/>
    </source>
</evidence>
<evidence type="ECO:0000256" key="4">
    <source>
        <dbReference type="SAM" id="MobiDB-lite"/>
    </source>
</evidence>
<evidence type="ECO:0000269" key="5">
    <source>
    </source>
</evidence>
<evidence type="ECO:0000269" key="6">
    <source>
    </source>
</evidence>
<evidence type="ECO:0000269" key="7">
    <source>
    </source>
</evidence>
<evidence type="ECO:0000269" key="8">
    <source>
    </source>
</evidence>
<evidence type="ECO:0000303" key="9">
    <source>
    </source>
</evidence>
<evidence type="ECO:0000303" key="10">
    <source>
    </source>
</evidence>
<evidence type="ECO:0000312" key="11">
    <source>
        <dbReference type="EMBL" id="AAD48771.1"/>
    </source>
</evidence>